<dbReference type="EMBL" id="AL513382">
    <property type="protein sequence ID" value="CAD09279.1"/>
    <property type="molecule type" value="Genomic_DNA"/>
</dbReference>
<dbReference type="EMBL" id="AE014613">
    <property type="protein sequence ID" value="AAO71665.1"/>
    <property type="molecule type" value="Genomic_DNA"/>
</dbReference>
<dbReference type="RefSeq" id="NP_458593.1">
    <property type="nucleotide sequence ID" value="NC_003198.1"/>
</dbReference>
<dbReference type="RefSeq" id="WP_000093130.1">
    <property type="nucleotide sequence ID" value="NZ_WSUR01000047.1"/>
</dbReference>
<dbReference type="SMR" id="P60065"/>
<dbReference type="STRING" id="220341.gene:17588323"/>
<dbReference type="GeneID" id="66758511"/>
<dbReference type="KEGG" id="stt:t4201"/>
<dbReference type="KEGG" id="sty:STY4493"/>
<dbReference type="PATRIC" id="fig|220341.7.peg.4596"/>
<dbReference type="eggNOG" id="COG0531">
    <property type="taxonomic scope" value="Bacteria"/>
</dbReference>
<dbReference type="HOGENOM" id="CLU_007946_1_0_6"/>
<dbReference type="OMA" id="WVSNAAL"/>
<dbReference type="OrthoDB" id="3185104at2"/>
<dbReference type="Proteomes" id="UP000000541">
    <property type="component" value="Chromosome"/>
</dbReference>
<dbReference type="Proteomes" id="UP000002670">
    <property type="component" value="Chromosome"/>
</dbReference>
<dbReference type="GO" id="GO:0005886">
    <property type="term" value="C:plasma membrane"/>
    <property type="evidence" value="ECO:0007669"/>
    <property type="project" value="UniProtKB-SubCell"/>
</dbReference>
<dbReference type="GO" id="GO:0015297">
    <property type="term" value="F:antiporter activity"/>
    <property type="evidence" value="ECO:0007669"/>
    <property type="project" value="UniProtKB-KW"/>
</dbReference>
<dbReference type="GO" id="GO:0006865">
    <property type="term" value="P:amino acid transport"/>
    <property type="evidence" value="ECO:0007669"/>
    <property type="project" value="UniProtKB-KW"/>
</dbReference>
<dbReference type="FunFam" id="1.20.1740.10:FF:000011">
    <property type="entry name" value="Arginine/agmatine antiporter"/>
    <property type="match status" value="1"/>
</dbReference>
<dbReference type="Gene3D" id="1.20.1740.10">
    <property type="entry name" value="Amino acid/polyamine transporter I"/>
    <property type="match status" value="1"/>
</dbReference>
<dbReference type="InterPro" id="IPR002293">
    <property type="entry name" value="AA/rel_permease1"/>
</dbReference>
<dbReference type="InterPro" id="IPR050367">
    <property type="entry name" value="APC_superfamily"/>
</dbReference>
<dbReference type="NCBIfam" id="NF007929">
    <property type="entry name" value="PRK10644.1"/>
    <property type="match status" value="1"/>
</dbReference>
<dbReference type="PANTHER" id="PTHR42770">
    <property type="entry name" value="AMINO ACID TRANSPORTER-RELATED"/>
    <property type="match status" value="1"/>
</dbReference>
<dbReference type="PANTHER" id="PTHR42770:SF18">
    <property type="entry name" value="ARGININE_AGMATINE ANTIPORTER"/>
    <property type="match status" value="1"/>
</dbReference>
<dbReference type="Pfam" id="PF13520">
    <property type="entry name" value="AA_permease_2"/>
    <property type="match status" value="1"/>
</dbReference>
<dbReference type="PIRSF" id="PIRSF006060">
    <property type="entry name" value="AA_transporter"/>
    <property type="match status" value="1"/>
</dbReference>
<gene>
    <name type="primary">adiC</name>
    <name type="ordered locus">STY4493</name>
    <name type="ordered locus">t4201</name>
</gene>
<feature type="chain" id="PRO_0000054234" description="Arginine/agmatine antiporter">
    <location>
        <begin position="1"/>
        <end position="445"/>
    </location>
</feature>
<feature type="topological domain" description="Cytoplasmic" evidence="3">
    <location>
        <begin position="1"/>
        <end position="9"/>
    </location>
</feature>
<feature type="transmembrane region" description="Helical" evidence="3">
    <location>
        <begin position="10"/>
        <end position="30"/>
    </location>
</feature>
<feature type="topological domain" description="Periplasmic" evidence="3">
    <location>
        <begin position="31"/>
        <end position="38"/>
    </location>
</feature>
<feature type="transmembrane region" description="Helical" evidence="3">
    <location>
        <begin position="39"/>
        <end position="59"/>
    </location>
</feature>
<feature type="topological domain" description="Cytoplasmic" evidence="3">
    <location>
        <begin position="60"/>
        <end position="98"/>
    </location>
</feature>
<feature type="transmembrane region" description="Helical" evidence="3">
    <location>
        <begin position="99"/>
        <end position="119"/>
    </location>
</feature>
<feature type="topological domain" description="Periplasmic" evidence="3">
    <location>
        <begin position="120"/>
        <end position="122"/>
    </location>
</feature>
<feature type="transmembrane region" description="Helical" evidence="3">
    <location>
        <begin position="123"/>
        <end position="143"/>
    </location>
</feature>
<feature type="topological domain" description="Cytoplasmic" evidence="3">
    <location>
        <begin position="144"/>
        <end position="152"/>
    </location>
</feature>
<feature type="transmembrane region" description="Helical" evidence="3">
    <location>
        <begin position="153"/>
        <end position="173"/>
    </location>
</feature>
<feature type="topological domain" description="Periplasmic" evidence="3">
    <location>
        <begin position="174"/>
        <end position="196"/>
    </location>
</feature>
<feature type="transmembrane region" description="Helical" evidence="3">
    <location>
        <begin position="197"/>
        <end position="217"/>
    </location>
</feature>
<feature type="topological domain" description="Cytoplasmic" evidence="3">
    <location>
        <begin position="218"/>
        <end position="225"/>
    </location>
</feature>
<feature type="transmembrane region" description="Helical" evidence="3">
    <location>
        <begin position="226"/>
        <end position="246"/>
    </location>
</feature>
<feature type="topological domain" description="Periplasmic" evidence="3">
    <location>
        <begin position="247"/>
        <end position="275"/>
    </location>
</feature>
<feature type="transmembrane region" description="Helical" evidence="3">
    <location>
        <begin position="276"/>
        <end position="296"/>
    </location>
</feature>
<feature type="topological domain" description="Cytoplasmic" evidence="3">
    <location>
        <begin position="297"/>
        <end position="319"/>
    </location>
</feature>
<feature type="transmembrane region" description="Helical" evidence="3">
    <location>
        <begin position="320"/>
        <end position="340"/>
    </location>
</feature>
<feature type="topological domain" description="Periplasmic" evidence="3">
    <location>
        <begin position="341"/>
        <end position="355"/>
    </location>
</feature>
<feature type="transmembrane region" description="Helical" evidence="3">
    <location>
        <begin position="356"/>
        <end position="376"/>
    </location>
</feature>
<feature type="topological domain" description="Cytoplasmic" evidence="3">
    <location>
        <begin position="377"/>
        <end position="385"/>
    </location>
</feature>
<feature type="transmembrane region" description="Helical" evidence="3">
    <location>
        <begin position="386"/>
        <end position="406"/>
    </location>
</feature>
<feature type="topological domain" description="Periplasmic" evidence="3">
    <location>
        <begin position="407"/>
        <end position="408"/>
    </location>
</feature>
<feature type="transmembrane region" description="Helical" evidence="3">
    <location>
        <begin position="409"/>
        <end position="429"/>
    </location>
</feature>
<feature type="topological domain" description="Cytoplasmic" evidence="3">
    <location>
        <begin position="430"/>
        <end position="445"/>
    </location>
</feature>
<feature type="binding site" evidence="1">
    <location>
        <position position="23"/>
    </location>
    <ligand>
        <name>agmatine</name>
        <dbReference type="ChEBI" id="CHEBI:58145"/>
    </ligand>
</feature>
<feature type="binding site" evidence="1">
    <location>
        <position position="23"/>
    </location>
    <ligand>
        <name>L-arginine</name>
        <dbReference type="ChEBI" id="CHEBI:32682"/>
    </ligand>
</feature>
<feature type="binding site" evidence="1">
    <location>
        <position position="26"/>
    </location>
    <ligand>
        <name>L-arginine</name>
        <dbReference type="ChEBI" id="CHEBI:32682"/>
    </ligand>
</feature>
<feature type="binding site" evidence="1">
    <location>
        <position position="96"/>
    </location>
    <ligand>
        <name>agmatine</name>
        <dbReference type="ChEBI" id="CHEBI:58145"/>
    </ligand>
</feature>
<feature type="binding site" evidence="1">
    <location>
        <position position="96"/>
    </location>
    <ligand>
        <name>L-arginine</name>
        <dbReference type="ChEBI" id="CHEBI:32682"/>
    </ligand>
</feature>
<feature type="binding site" evidence="1">
    <location>
        <position position="97"/>
    </location>
    <ligand>
        <name>agmatine</name>
        <dbReference type="ChEBI" id="CHEBI:58145"/>
    </ligand>
</feature>
<feature type="binding site" evidence="1">
    <location>
        <position position="101"/>
    </location>
    <ligand>
        <name>agmatine</name>
        <dbReference type="ChEBI" id="CHEBI:58145"/>
    </ligand>
</feature>
<feature type="binding site" evidence="1">
    <location>
        <position position="202"/>
    </location>
    <ligand>
        <name>L-arginine</name>
        <dbReference type="ChEBI" id="CHEBI:32682"/>
    </ligand>
</feature>
<feature type="binding site" evidence="1">
    <location>
        <position position="205"/>
    </location>
    <ligand>
        <name>agmatine</name>
        <dbReference type="ChEBI" id="CHEBI:58145"/>
    </ligand>
</feature>
<feature type="binding site" evidence="1">
    <location>
        <position position="205"/>
    </location>
    <ligand>
        <name>L-arginine</name>
        <dbReference type="ChEBI" id="CHEBI:32682"/>
    </ligand>
</feature>
<feature type="binding site" evidence="1">
    <location>
        <position position="293"/>
    </location>
    <ligand>
        <name>agmatine</name>
        <dbReference type="ChEBI" id="CHEBI:58145"/>
    </ligand>
</feature>
<feature type="binding site" evidence="1">
    <location>
        <position position="357"/>
    </location>
    <ligand>
        <name>L-arginine</name>
        <dbReference type="ChEBI" id="CHEBI:32682"/>
    </ligand>
</feature>
<feature type="site" description="Cytoplasmic (distal) gate" evidence="1">
    <location>
        <position position="93"/>
    </location>
</feature>
<feature type="site" description="Periplasmic (proximal) gate" evidence="2">
    <location>
        <position position="202"/>
    </location>
</feature>
<feature type="site" description="Cytoplasmic (distal) gate" evidence="1">
    <location>
        <position position="208"/>
    </location>
</feature>
<feature type="site" description="Middle gate" evidence="2">
    <location>
        <position position="293"/>
    </location>
</feature>
<feature type="site" description="Cytoplasmic (distal) gate" evidence="1">
    <location>
        <position position="365"/>
    </location>
</feature>
<reference key="1">
    <citation type="journal article" date="2001" name="Nature">
        <title>Complete genome sequence of a multiple drug resistant Salmonella enterica serovar Typhi CT18.</title>
        <authorList>
            <person name="Parkhill J."/>
            <person name="Dougan G."/>
            <person name="James K.D."/>
            <person name="Thomson N.R."/>
            <person name="Pickard D."/>
            <person name="Wain J."/>
            <person name="Churcher C.M."/>
            <person name="Mungall K.L."/>
            <person name="Bentley S.D."/>
            <person name="Holden M.T.G."/>
            <person name="Sebaihia M."/>
            <person name="Baker S."/>
            <person name="Basham D."/>
            <person name="Brooks K."/>
            <person name="Chillingworth T."/>
            <person name="Connerton P."/>
            <person name="Cronin A."/>
            <person name="Davis P."/>
            <person name="Davies R.M."/>
            <person name="Dowd L."/>
            <person name="White N."/>
            <person name="Farrar J."/>
            <person name="Feltwell T."/>
            <person name="Hamlin N."/>
            <person name="Haque A."/>
            <person name="Hien T.T."/>
            <person name="Holroyd S."/>
            <person name="Jagels K."/>
            <person name="Krogh A."/>
            <person name="Larsen T.S."/>
            <person name="Leather S."/>
            <person name="Moule S."/>
            <person name="O'Gaora P."/>
            <person name="Parry C."/>
            <person name="Quail M.A."/>
            <person name="Rutherford K.M."/>
            <person name="Simmonds M."/>
            <person name="Skelton J."/>
            <person name="Stevens K."/>
            <person name="Whitehead S."/>
            <person name="Barrell B.G."/>
        </authorList>
    </citation>
    <scope>NUCLEOTIDE SEQUENCE [LARGE SCALE GENOMIC DNA]</scope>
    <source>
        <strain>CT18</strain>
    </source>
</reference>
<reference key="2">
    <citation type="journal article" date="2003" name="J. Bacteriol.">
        <title>Comparative genomics of Salmonella enterica serovar Typhi strains Ty2 and CT18.</title>
        <authorList>
            <person name="Deng W."/>
            <person name="Liou S.-R."/>
            <person name="Plunkett G. III"/>
            <person name="Mayhew G.F."/>
            <person name="Rose D.J."/>
            <person name="Burland V."/>
            <person name="Kodoyianni V."/>
            <person name="Schwartz D.C."/>
            <person name="Blattner F.R."/>
        </authorList>
    </citation>
    <scope>NUCLEOTIDE SEQUENCE [LARGE SCALE GENOMIC DNA]</scope>
    <source>
        <strain>ATCC 700931 / Ty2</strain>
    </source>
</reference>
<comment type="function">
    <text evidence="2">Major component of the acid-resistance (AR) system allowing enteric pathogens to survive the acidic environment in the stomach. Exchanges extracellular arginine for its intracellular decarboxylation product agmatine (Agm) thereby expelling intracellular protons. Probably undergoes several conformational states in order to translocate the substrate across the membrane; keeps the substrate accessible to only 1 side of the membrane at a time by opening and closing 3 membrane-internal gates.</text>
</comment>
<comment type="catalytic activity">
    <reaction evidence="1">
        <text>agmatine(in) + L-arginine(out) = agmatine(out) + L-arginine(in)</text>
        <dbReference type="Rhea" id="RHEA:29651"/>
        <dbReference type="ChEBI" id="CHEBI:32682"/>
        <dbReference type="ChEBI" id="CHEBI:58145"/>
    </reaction>
</comment>
<comment type="subunit">
    <text evidence="1">Homodimer; each subunit has its own individual transport capacity.</text>
</comment>
<comment type="subcellular location">
    <subcellularLocation>
        <location evidence="1">Cell inner membrane</location>
        <topology evidence="3">Multi-pass membrane protein</topology>
    </subcellularLocation>
</comment>
<comment type="domain">
    <text evidence="1">Each subunit has 12 transmembrane (TM) helices; TM1 and TM6 are interrupted by short non-helical Gly-rich loops in the middle of their transmembrane spans. Each subunit has a central cavity which binds substrate.</text>
</comment>
<comment type="similarity">
    <text evidence="4">Belongs to the amino acid-polyamine-organocation (APC) superfamily. Basic amino acid/polyamine antiporter (APA) (TC 2.A.3.2) family.</text>
</comment>
<sequence>MSSDADAHKVGLIPVTLMVSGNIMGSGVFLLPANLAATGGIAIYGWLVTIIGALALSMVYAKMSSLDPSPGGSYAYARRCFGPFLGYQTNVLYWLACWIGNIAMVVIGVGYLSYFFPILKDPLVLTLTCVAVLWIFVLLNIVGPKMITRVQAVATVLALVPIVGIAVFGWFWFKGETYMAAWNVSGMNTFGAIQSTLNVTLWSFIGVESASVAAGVVKNPKRNVPIATIGGVLIAAVCYVLSTTAIMGMIPNAALRVSASPFGDAARMALGDTAGAIVSFCAAAGCLGSLGGWTLLAGQTAKAAADDGLFPPIFARVNKAGTPVAGLLIVGVLMTIFQFSSMSPNAAKEFGLVSSVSVIFTLVPYLYTCAALLLLGHGHFGKARPLYLLITFVAFVYCIWAVIGSGAKEVMWSFVTLMVITALYALNYNRIHKNPYPLDAPVKQD</sequence>
<name>ADIC_SALTI</name>
<organism>
    <name type="scientific">Salmonella typhi</name>
    <dbReference type="NCBI Taxonomy" id="90370"/>
    <lineage>
        <taxon>Bacteria</taxon>
        <taxon>Pseudomonadati</taxon>
        <taxon>Pseudomonadota</taxon>
        <taxon>Gammaproteobacteria</taxon>
        <taxon>Enterobacterales</taxon>
        <taxon>Enterobacteriaceae</taxon>
        <taxon>Salmonella</taxon>
    </lineage>
</organism>
<proteinExistence type="inferred from homology"/>
<evidence type="ECO:0000250" key="1">
    <source>
        <dbReference type="UniProtKB" id="P60061"/>
    </source>
</evidence>
<evidence type="ECO:0000250" key="2">
    <source>
        <dbReference type="UniProtKB" id="P60063"/>
    </source>
</evidence>
<evidence type="ECO:0000255" key="3"/>
<evidence type="ECO:0000305" key="4"/>
<keyword id="KW-0029">Amino-acid transport</keyword>
<keyword id="KW-0050">Antiport</keyword>
<keyword id="KW-0997">Cell inner membrane</keyword>
<keyword id="KW-1003">Cell membrane</keyword>
<keyword id="KW-0472">Membrane</keyword>
<keyword id="KW-0812">Transmembrane</keyword>
<keyword id="KW-1133">Transmembrane helix</keyword>
<keyword id="KW-0813">Transport</keyword>
<accession>P60065</accession>
<accession>Q8XFJ0</accession>
<protein>
    <recommendedName>
        <fullName>Arginine/agmatine antiporter</fullName>
    </recommendedName>
</protein>